<reference key="1">
    <citation type="journal article" date="1996" name="Microbiology">
        <title>Sequence analysis of the Bacillus subtilis chromosome region between the serA and kdg loci cloned in a yeast artificial chromosome.</title>
        <authorList>
            <person name="Sorokin A.V."/>
            <person name="Azevedo V."/>
            <person name="Zumstein E."/>
            <person name="Galleron N."/>
            <person name="Ehrlich S.D."/>
            <person name="Serror P."/>
        </authorList>
    </citation>
    <scope>NUCLEOTIDE SEQUENCE [GENOMIC DNA]</scope>
    <source>
        <strain>168 / Marburg / ATCC 6051 / DSM 10 / JCM 1465 / NBRC 13719 / NCIMB 3610 / NRRL NRS-744 / VKM B-501</strain>
    </source>
</reference>
<reference key="2">
    <citation type="journal article" date="1997" name="Nature">
        <title>The complete genome sequence of the Gram-positive bacterium Bacillus subtilis.</title>
        <authorList>
            <person name="Kunst F."/>
            <person name="Ogasawara N."/>
            <person name="Moszer I."/>
            <person name="Albertini A.M."/>
            <person name="Alloni G."/>
            <person name="Azevedo V."/>
            <person name="Bertero M.G."/>
            <person name="Bessieres P."/>
            <person name="Bolotin A."/>
            <person name="Borchert S."/>
            <person name="Borriss R."/>
            <person name="Boursier L."/>
            <person name="Brans A."/>
            <person name="Braun M."/>
            <person name="Brignell S.C."/>
            <person name="Bron S."/>
            <person name="Brouillet S."/>
            <person name="Bruschi C.V."/>
            <person name="Caldwell B."/>
            <person name="Capuano V."/>
            <person name="Carter N.M."/>
            <person name="Choi S.-K."/>
            <person name="Codani J.-J."/>
            <person name="Connerton I.F."/>
            <person name="Cummings N.J."/>
            <person name="Daniel R.A."/>
            <person name="Denizot F."/>
            <person name="Devine K.M."/>
            <person name="Duesterhoeft A."/>
            <person name="Ehrlich S.D."/>
            <person name="Emmerson P.T."/>
            <person name="Entian K.-D."/>
            <person name="Errington J."/>
            <person name="Fabret C."/>
            <person name="Ferrari E."/>
            <person name="Foulger D."/>
            <person name="Fritz C."/>
            <person name="Fujita M."/>
            <person name="Fujita Y."/>
            <person name="Fuma S."/>
            <person name="Galizzi A."/>
            <person name="Galleron N."/>
            <person name="Ghim S.-Y."/>
            <person name="Glaser P."/>
            <person name="Goffeau A."/>
            <person name="Golightly E.J."/>
            <person name="Grandi G."/>
            <person name="Guiseppi G."/>
            <person name="Guy B.J."/>
            <person name="Haga K."/>
            <person name="Haiech J."/>
            <person name="Harwood C.R."/>
            <person name="Henaut A."/>
            <person name="Hilbert H."/>
            <person name="Holsappel S."/>
            <person name="Hosono S."/>
            <person name="Hullo M.-F."/>
            <person name="Itaya M."/>
            <person name="Jones L.-M."/>
            <person name="Joris B."/>
            <person name="Karamata D."/>
            <person name="Kasahara Y."/>
            <person name="Klaerr-Blanchard M."/>
            <person name="Klein C."/>
            <person name="Kobayashi Y."/>
            <person name="Koetter P."/>
            <person name="Koningstein G."/>
            <person name="Krogh S."/>
            <person name="Kumano M."/>
            <person name="Kurita K."/>
            <person name="Lapidus A."/>
            <person name="Lardinois S."/>
            <person name="Lauber J."/>
            <person name="Lazarevic V."/>
            <person name="Lee S.-M."/>
            <person name="Levine A."/>
            <person name="Liu H."/>
            <person name="Masuda S."/>
            <person name="Mauel C."/>
            <person name="Medigue C."/>
            <person name="Medina N."/>
            <person name="Mellado R.P."/>
            <person name="Mizuno M."/>
            <person name="Moestl D."/>
            <person name="Nakai S."/>
            <person name="Noback M."/>
            <person name="Noone D."/>
            <person name="O'Reilly M."/>
            <person name="Ogawa K."/>
            <person name="Ogiwara A."/>
            <person name="Oudega B."/>
            <person name="Park S.-H."/>
            <person name="Parro V."/>
            <person name="Pohl T.M."/>
            <person name="Portetelle D."/>
            <person name="Porwollik S."/>
            <person name="Prescott A.M."/>
            <person name="Presecan E."/>
            <person name="Pujic P."/>
            <person name="Purnelle B."/>
            <person name="Rapoport G."/>
            <person name="Rey M."/>
            <person name="Reynolds S."/>
            <person name="Rieger M."/>
            <person name="Rivolta C."/>
            <person name="Rocha E."/>
            <person name="Roche B."/>
            <person name="Rose M."/>
            <person name="Sadaie Y."/>
            <person name="Sato T."/>
            <person name="Scanlan E."/>
            <person name="Schleich S."/>
            <person name="Schroeter R."/>
            <person name="Scoffone F."/>
            <person name="Sekiguchi J."/>
            <person name="Sekowska A."/>
            <person name="Seror S.J."/>
            <person name="Serror P."/>
            <person name="Shin B.-S."/>
            <person name="Soldo B."/>
            <person name="Sorokin A."/>
            <person name="Tacconi E."/>
            <person name="Takagi T."/>
            <person name="Takahashi H."/>
            <person name="Takemaru K."/>
            <person name="Takeuchi M."/>
            <person name="Tamakoshi A."/>
            <person name="Tanaka T."/>
            <person name="Terpstra P."/>
            <person name="Tognoni A."/>
            <person name="Tosato V."/>
            <person name="Uchiyama S."/>
            <person name="Vandenbol M."/>
            <person name="Vannier F."/>
            <person name="Vassarotti A."/>
            <person name="Viari A."/>
            <person name="Wambutt R."/>
            <person name="Wedler E."/>
            <person name="Wedler H."/>
            <person name="Weitzenegger T."/>
            <person name="Winters P."/>
            <person name="Wipat A."/>
            <person name="Yamamoto H."/>
            <person name="Yamane K."/>
            <person name="Yasumoto K."/>
            <person name="Yata K."/>
            <person name="Yoshida K."/>
            <person name="Yoshikawa H.-F."/>
            <person name="Zumstein E."/>
            <person name="Yoshikawa H."/>
            <person name="Danchin A."/>
        </authorList>
    </citation>
    <scope>NUCLEOTIDE SEQUENCE [LARGE SCALE GENOMIC DNA]</scope>
    <source>
        <strain>168</strain>
    </source>
</reference>
<accession>P38491</accession>
<name>YPFA_BACSU</name>
<proteinExistence type="evidence at protein level"/>
<dbReference type="EMBL" id="U11687">
    <property type="protein sequence ID" value="AAA85147.1"/>
    <property type="molecule type" value="Genomic_DNA"/>
</dbReference>
<dbReference type="EMBL" id="L47648">
    <property type="protein sequence ID" value="AAC83959.1"/>
    <property type="molecule type" value="Genomic_DNA"/>
</dbReference>
<dbReference type="EMBL" id="AL009126">
    <property type="protein sequence ID" value="CAB14207.1"/>
    <property type="molecule type" value="Genomic_DNA"/>
</dbReference>
<dbReference type="PIR" id="H69934">
    <property type="entry name" value="H69934"/>
</dbReference>
<dbReference type="PDB" id="5VX6">
    <property type="method" value="X-ray"/>
    <property type="resolution" value="3.20 A"/>
    <property type="chains" value="A/B=2-213"/>
</dbReference>
<dbReference type="PDBsum" id="5VX6"/>
<dbReference type="SMR" id="P38491"/>
<dbReference type="FunCoup" id="P38491">
    <property type="interactions" value="27"/>
</dbReference>
<dbReference type="IntAct" id="P38491">
    <property type="interactions" value="5"/>
</dbReference>
<dbReference type="STRING" id="224308.BSU22910"/>
<dbReference type="PaxDb" id="224308-BSU22910"/>
<dbReference type="EnsemblBacteria" id="CAB14207">
    <property type="protein sequence ID" value="CAB14207"/>
    <property type="gene ID" value="BSU_22910"/>
</dbReference>
<dbReference type="GeneID" id="938984"/>
<dbReference type="KEGG" id="bsu:BSU22910"/>
<dbReference type="PATRIC" id="fig|224308.179.peg.2498"/>
<dbReference type="eggNOG" id="COG5581">
    <property type="taxonomic scope" value="Bacteria"/>
</dbReference>
<dbReference type="InParanoid" id="P38491"/>
<dbReference type="OrthoDB" id="1951449at2"/>
<dbReference type="BioCyc" id="BSUB:BSU22910-MONOMER"/>
<dbReference type="Proteomes" id="UP000001570">
    <property type="component" value="Chromosome"/>
</dbReference>
<dbReference type="GO" id="GO:0035438">
    <property type="term" value="F:cyclic-di-GMP binding"/>
    <property type="evidence" value="ECO:0007669"/>
    <property type="project" value="InterPro"/>
</dbReference>
<dbReference type="Gene3D" id="2.40.10.220">
    <property type="entry name" value="predicted glycosyltransferase like domains"/>
    <property type="match status" value="1"/>
</dbReference>
<dbReference type="InterPro" id="IPR009875">
    <property type="entry name" value="PilZ_domain"/>
</dbReference>
<dbReference type="InterPro" id="IPR009926">
    <property type="entry name" value="T3SS_YcgR_PilZN"/>
</dbReference>
<dbReference type="Pfam" id="PF07238">
    <property type="entry name" value="PilZ"/>
    <property type="match status" value="1"/>
</dbReference>
<dbReference type="Pfam" id="PF12945">
    <property type="entry name" value="PilZNR"/>
    <property type="match status" value="1"/>
</dbReference>
<dbReference type="SUPFAM" id="SSF141371">
    <property type="entry name" value="PilZ domain-like"/>
    <property type="match status" value="1"/>
</dbReference>
<protein>
    <recommendedName>
        <fullName>Uncharacterized protein YpfA</fullName>
    </recommendedName>
</protein>
<gene>
    <name type="primary">ypfA</name>
    <name type="synonym">jofA</name>
    <name type="ordered locus">BSU22910</name>
</gene>
<sequence>MIEIGENVLLEYIEENELKKAKSKAVSIENNELLIAYPVDVVTGRTVILHNDMEVTVEFVGKDEVPYRFISRIKGKVKDKLQMICLEMPPREKMKRIQRRQYVRTDAVLDVQIQPGNEEEIRTLSYNISAGGIAVVLADGLSFQSGESLRLIIRLPEEEHTRQIETEAVVRRIFNDPKSEKRKMTLEYSEIAAGDQQALLQYCIRRQLNKRRKARME</sequence>
<organism>
    <name type="scientific">Bacillus subtilis (strain 168)</name>
    <dbReference type="NCBI Taxonomy" id="224308"/>
    <lineage>
        <taxon>Bacteria</taxon>
        <taxon>Bacillati</taxon>
        <taxon>Bacillota</taxon>
        <taxon>Bacilli</taxon>
        <taxon>Bacillales</taxon>
        <taxon>Bacillaceae</taxon>
        <taxon>Bacillus</taxon>
    </lineage>
</organism>
<keyword id="KW-0002">3D-structure</keyword>
<keyword id="KW-1185">Reference proteome</keyword>
<evidence type="ECO:0007829" key="1">
    <source>
        <dbReference type="PDB" id="5VX6"/>
    </source>
</evidence>
<feature type="chain" id="PRO_0000049690" description="Uncharacterized protein YpfA">
    <location>
        <begin position="1"/>
        <end position="217"/>
    </location>
</feature>
<feature type="domain" description="PilZ">
    <location>
        <begin position="98"/>
        <end position="203"/>
    </location>
</feature>
<feature type="strand" evidence="1">
    <location>
        <begin position="4"/>
        <end position="14"/>
    </location>
</feature>
<feature type="strand" evidence="1">
    <location>
        <begin position="17"/>
        <end position="27"/>
    </location>
</feature>
<feature type="strand" evidence="1">
    <location>
        <begin position="32"/>
        <end position="42"/>
    </location>
</feature>
<feature type="strand" evidence="1">
    <location>
        <begin position="56"/>
        <end position="60"/>
    </location>
</feature>
<feature type="strand" evidence="1">
    <location>
        <begin position="66"/>
        <end position="70"/>
    </location>
</feature>
<feature type="strand" evidence="1">
    <location>
        <begin position="73"/>
        <end position="87"/>
    </location>
</feature>
<feature type="strand" evidence="1">
    <location>
        <begin position="110"/>
        <end position="114"/>
    </location>
</feature>
<feature type="strand" evidence="1">
    <location>
        <begin position="121"/>
        <end position="128"/>
    </location>
</feature>
<feature type="strand" evidence="1">
    <location>
        <begin position="130"/>
        <end position="136"/>
    </location>
</feature>
<feature type="strand" evidence="1">
    <location>
        <begin position="148"/>
        <end position="155"/>
    </location>
</feature>
<feature type="strand" evidence="1">
    <location>
        <begin position="162"/>
        <end position="175"/>
    </location>
</feature>
<feature type="turn" evidence="1">
    <location>
        <begin position="177"/>
        <end position="179"/>
    </location>
</feature>
<feature type="strand" evidence="1">
    <location>
        <begin position="182"/>
        <end position="190"/>
    </location>
</feature>
<feature type="helix" evidence="1">
    <location>
        <begin position="193"/>
        <end position="208"/>
    </location>
</feature>